<organismHost>
    <name type="scientific">Ornithodoros</name>
    <name type="common">relapsing fever ticks</name>
    <dbReference type="NCBI Taxonomy" id="6937"/>
</organismHost>
<organismHost>
    <name type="scientific">Phacochoerus aethiopicus</name>
    <name type="common">Warthog</name>
    <dbReference type="NCBI Taxonomy" id="85517"/>
</organismHost>
<organismHost>
    <name type="scientific">Phacochoerus africanus</name>
    <name type="common">Warthog</name>
    <dbReference type="NCBI Taxonomy" id="41426"/>
</organismHost>
<organismHost>
    <name type="scientific">Potamochoerus larvatus</name>
    <name type="common">Bushpig</name>
    <dbReference type="NCBI Taxonomy" id="273792"/>
</organismHost>
<organismHost>
    <name type="scientific">Sus scrofa</name>
    <name type="common">Pig</name>
    <dbReference type="NCBI Taxonomy" id="9823"/>
</organismHost>
<proteinExistence type="inferred from homology"/>
<evidence type="ECO:0000250" key="1">
    <source>
        <dbReference type="UniProtKB" id="A9JLI5"/>
    </source>
</evidence>
<evidence type="ECO:0000250" key="2">
    <source>
        <dbReference type="UniProtKB" id="P18558"/>
    </source>
</evidence>
<evidence type="ECO:0000255" key="3"/>
<evidence type="ECO:0000305" key="4"/>
<organism>
    <name type="scientific">African swine fever virus (isolate Pig/Kenya/KEN-50/1950)</name>
    <name type="common">ASFV</name>
    <dbReference type="NCBI Taxonomy" id="561445"/>
    <lineage>
        <taxon>Viruses</taxon>
        <taxon>Varidnaviria</taxon>
        <taxon>Bamfordvirae</taxon>
        <taxon>Nucleocytoviricota</taxon>
        <taxon>Pokkesviricetes</taxon>
        <taxon>Asfuvirales</taxon>
        <taxon>Asfarviridae</taxon>
        <taxon>Asfivirus</taxon>
        <taxon>African swine fever virus</taxon>
    </lineage>
</organism>
<reference key="1">
    <citation type="submission" date="2003-03" db="EMBL/GenBank/DDBJ databases">
        <title>African swine fever virus genomes.</title>
        <authorList>
            <person name="Kutish G.F."/>
            <person name="Rock D.L."/>
        </authorList>
    </citation>
    <scope>NUCLEOTIDE SEQUENCE [LARGE SCALE GENOMIC DNA]</scope>
</reference>
<gene>
    <name type="ordered locus">Ken-011</name>
</gene>
<accession>P0C9H1</accession>
<comment type="function">
    <text evidence="2">Causes the redistribution of lumenal ER protein to an enlarged ERGIC compartment.</text>
</comment>
<comment type="subcellular location">
    <subcellularLocation>
        <location evidence="2">Virion</location>
    </subcellularLocation>
    <subcellularLocation>
        <location evidence="2">Host endoplasmic reticulum-Golgi intermediate compartment</location>
    </subcellularLocation>
</comment>
<comment type="induction">
    <text evidence="4">Expressed in the early phase of the viral replicative cycle.</text>
</comment>
<comment type="similarity">
    <text evidence="4">Belongs to the asfivirus MGF 110 family.</text>
</comment>
<sequence length="124" mass="14386">MLVIFLGILGLLANQVLGLPTQAGGHLRSTDNPPEEELKYWCTYMESCKFCWECTHGLCKNKVNESMPTIIENSYLTSCEVSRWYNQCTYDEGNGHYHVMDCSDPVPHNRPHRLRMKIYKKEDL</sequence>
<keyword id="KW-0244">Early protein</keyword>
<keyword id="KW-0325">Glycoprotein</keyword>
<keyword id="KW-0732">Signal</keyword>
<keyword id="KW-0946">Virion</keyword>
<feature type="signal peptide" evidence="1">
    <location>
        <begin position="1"/>
        <end position="28"/>
    </location>
</feature>
<feature type="chain" id="PRO_0000373193" description="Protein MGF 110-4L">
    <location>
        <begin position="29"/>
        <end position="124"/>
    </location>
</feature>
<feature type="short sequence motif" description="Prevents secretion from ER" evidence="2">
    <location>
        <begin position="121"/>
        <end position="124"/>
    </location>
</feature>
<feature type="glycosylation site" description="N-linked (GlcNAc...) asparagine; by host" evidence="3">
    <location>
        <position position="64"/>
    </location>
</feature>
<dbReference type="EMBL" id="AY261360">
    <property type="status" value="NOT_ANNOTATED_CDS"/>
    <property type="molecule type" value="Genomic_DNA"/>
</dbReference>
<dbReference type="Proteomes" id="UP000000861">
    <property type="component" value="Segment"/>
</dbReference>
<dbReference type="GO" id="GO:0044172">
    <property type="term" value="C:host cell endoplasmic reticulum-Golgi intermediate compartment"/>
    <property type="evidence" value="ECO:0007669"/>
    <property type="project" value="UniProtKB-SubCell"/>
</dbReference>
<dbReference type="GO" id="GO:0044423">
    <property type="term" value="C:virion component"/>
    <property type="evidence" value="ECO:0007669"/>
    <property type="project" value="UniProtKB-KW"/>
</dbReference>
<dbReference type="InterPro" id="IPR004848">
    <property type="entry name" value="ASFV_fam_110"/>
</dbReference>
<dbReference type="Pfam" id="PF01639">
    <property type="entry name" value="v110"/>
    <property type="match status" value="1"/>
</dbReference>
<protein>
    <recommendedName>
        <fullName>Protein MGF 110-4L</fullName>
    </recommendedName>
</protein>
<name>1104L_ASFK5</name>